<protein>
    <recommendedName>
        <fullName evidence="1">Betaine aldehyde dehydrogenase</fullName>
        <shortName evidence="1">BADH</shortName>
        <ecNumber evidence="1">1.2.1.8</ecNumber>
    </recommendedName>
</protein>
<organism>
    <name type="scientific">Rhizobium etli (strain ATCC 51251 / DSM 11541 / JCM 21823 / NBRC 15573 / CFN 42)</name>
    <dbReference type="NCBI Taxonomy" id="347834"/>
    <lineage>
        <taxon>Bacteria</taxon>
        <taxon>Pseudomonadati</taxon>
        <taxon>Pseudomonadota</taxon>
        <taxon>Alphaproteobacteria</taxon>
        <taxon>Hyphomicrobiales</taxon>
        <taxon>Rhizobiaceae</taxon>
        <taxon>Rhizobium/Agrobacterium group</taxon>
        <taxon>Rhizobium</taxon>
    </lineage>
</organism>
<sequence>MKAQPKASHFINGEYVEDTDGTVIESLYPATGEVIARLHAATPAIVEKAIAAAKRAQPEWAAMSPMARGRILKRAADIMRERNRELSELETLDTGKPIQETIVADPTSGADAFEFFGGVAPAGLNGSHIPLGQDFAYTKRVPLGVCVGIGAWNYPQQIACWKGAPALISGNAMVFKPSENTPLGALKIAEILHEAGLPKGLFNVIQGDRDTGPLLVNHPDVAKVSLTGSVPTGRRVAAAAAGSLKHVTMELGGKSPLIVFDDADLDSAVGGAMLGNFYSTGQVCSNGTRVFVQKAVKAEFLKRLKARTEAMLIGDPLDEATQIGPMVSWAQREKVIAYIEKGKAEGATLVAGGGIPNNVSGEGYYVQPTVFADVTDDMTIAREEIFGPVMSVLDFDDEDEVITRANASEFGLSGGVFTADLSRAHRVVDRLEAGTLWINTYNLCPVEIPFGGSKQSGFGRENSLAALEHYSELKTVYVGMGPVAAPY</sequence>
<feature type="chain" id="PRO_1000047052" description="Betaine aldehyde dehydrogenase">
    <location>
        <begin position="1"/>
        <end position="487"/>
    </location>
</feature>
<feature type="active site" description="Charge relay system" evidence="1">
    <location>
        <position position="162"/>
    </location>
</feature>
<feature type="active site" description="Proton acceptor" evidence="1">
    <location>
        <position position="250"/>
    </location>
</feature>
<feature type="active site" description="Nucleophile" evidence="1">
    <location>
        <position position="284"/>
    </location>
</feature>
<feature type="active site" description="Charge relay system" evidence="1">
    <location>
        <position position="461"/>
    </location>
</feature>
<feature type="binding site" evidence="1">
    <location>
        <position position="26"/>
    </location>
    <ligand>
        <name>K(+)</name>
        <dbReference type="ChEBI" id="CHEBI:29103"/>
        <label>1</label>
    </ligand>
</feature>
<feature type="binding site" evidence="1">
    <location>
        <position position="93"/>
    </location>
    <ligand>
        <name>K(+)</name>
        <dbReference type="ChEBI" id="CHEBI:29103"/>
        <label>1</label>
    </ligand>
</feature>
<feature type="binding site" evidence="1">
    <location>
        <begin position="150"/>
        <end position="152"/>
    </location>
    <ligand>
        <name>NAD(+)</name>
        <dbReference type="ChEBI" id="CHEBI:57540"/>
    </ligand>
</feature>
<feature type="binding site" evidence="1">
    <location>
        <begin position="176"/>
        <end position="179"/>
    </location>
    <ligand>
        <name>NAD(+)</name>
        <dbReference type="ChEBI" id="CHEBI:57540"/>
    </ligand>
</feature>
<feature type="binding site" evidence="1">
    <location>
        <begin position="229"/>
        <end position="232"/>
    </location>
    <ligand>
        <name>NAD(+)</name>
        <dbReference type="ChEBI" id="CHEBI:57540"/>
    </ligand>
</feature>
<feature type="binding site" evidence="1">
    <location>
        <position position="244"/>
    </location>
    <ligand>
        <name>K(+)</name>
        <dbReference type="ChEBI" id="CHEBI:29103"/>
        <label>2</label>
    </ligand>
</feature>
<feature type="binding site" evidence="1">
    <location>
        <position position="252"/>
    </location>
    <ligand>
        <name>NAD(+)</name>
        <dbReference type="ChEBI" id="CHEBI:57540"/>
    </ligand>
</feature>
<feature type="binding site" description="covalent" evidence="1">
    <location>
        <position position="284"/>
    </location>
    <ligand>
        <name>NAD(+)</name>
        <dbReference type="ChEBI" id="CHEBI:57540"/>
    </ligand>
</feature>
<feature type="binding site" evidence="1">
    <location>
        <position position="384"/>
    </location>
    <ligand>
        <name>NAD(+)</name>
        <dbReference type="ChEBI" id="CHEBI:57540"/>
    </ligand>
</feature>
<feature type="binding site" evidence="1">
    <location>
        <position position="454"/>
    </location>
    <ligand>
        <name>K(+)</name>
        <dbReference type="ChEBI" id="CHEBI:29103"/>
        <label>2</label>
    </ligand>
</feature>
<feature type="binding site" evidence="1">
    <location>
        <position position="457"/>
    </location>
    <ligand>
        <name>K(+)</name>
        <dbReference type="ChEBI" id="CHEBI:29103"/>
        <label>2</label>
    </ligand>
</feature>
<feature type="modified residue" description="Cysteine sulfenic acid (-SOH)" evidence="1">
    <location>
        <position position="284"/>
    </location>
</feature>
<reference key="1">
    <citation type="journal article" date="2006" name="Proc. Natl. Acad. Sci. U.S.A.">
        <title>The partitioned Rhizobium etli genome: genetic and metabolic redundancy in seven interacting replicons.</title>
        <authorList>
            <person name="Gonzalez V."/>
            <person name="Santamaria R.I."/>
            <person name="Bustos P."/>
            <person name="Hernandez-Gonzalez I."/>
            <person name="Medrano-Soto A."/>
            <person name="Moreno-Hagelsieb G."/>
            <person name="Janga S.C."/>
            <person name="Ramirez M.A."/>
            <person name="Jimenez-Jacinto V."/>
            <person name="Collado-Vides J."/>
            <person name="Davila G."/>
        </authorList>
    </citation>
    <scope>NUCLEOTIDE SEQUENCE [LARGE SCALE GENOMIC DNA]</scope>
    <source>
        <strain>ATCC 51251 / DSM 11541 / JCM 21823 / NBRC 15573 / CFN 42</strain>
    </source>
</reference>
<proteinExistence type="inferred from homology"/>
<name>BETB_RHIEC</name>
<keyword id="KW-0479">Metal-binding</keyword>
<keyword id="KW-0520">NAD</keyword>
<keyword id="KW-0521">NADP</keyword>
<keyword id="KW-0558">Oxidation</keyword>
<keyword id="KW-0560">Oxidoreductase</keyword>
<keyword id="KW-0630">Potassium</keyword>
<keyword id="KW-1185">Reference proteome</keyword>
<evidence type="ECO:0000255" key="1">
    <source>
        <dbReference type="HAMAP-Rule" id="MF_00804"/>
    </source>
</evidence>
<comment type="function">
    <text evidence="1">Involved in the biosynthesis of the osmoprotectant glycine betaine. Catalyzes the irreversible oxidation of betaine aldehyde to the corresponding acid.</text>
</comment>
<comment type="catalytic activity">
    <reaction evidence="1">
        <text>betaine aldehyde + NAD(+) + H2O = glycine betaine + NADH + 2 H(+)</text>
        <dbReference type="Rhea" id="RHEA:15305"/>
        <dbReference type="ChEBI" id="CHEBI:15377"/>
        <dbReference type="ChEBI" id="CHEBI:15378"/>
        <dbReference type="ChEBI" id="CHEBI:15710"/>
        <dbReference type="ChEBI" id="CHEBI:17750"/>
        <dbReference type="ChEBI" id="CHEBI:57540"/>
        <dbReference type="ChEBI" id="CHEBI:57945"/>
        <dbReference type="EC" id="1.2.1.8"/>
    </reaction>
    <physiologicalReaction direction="left-to-right" evidence="1">
        <dbReference type="Rhea" id="RHEA:15306"/>
    </physiologicalReaction>
</comment>
<comment type="cofactor">
    <cofactor evidence="1">
        <name>K(+)</name>
        <dbReference type="ChEBI" id="CHEBI:29103"/>
    </cofactor>
    <text evidence="1">Binds 2 potassium ions per subunit.</text>
</comment>
<comment type="pathway">
    <text evidence="1">Amine and polyamine biosynthesis; betaine biosynthesis via choline pathway; betaine from betaine aldehyde: step 1/1.</text>
</comment>
<comment type="subunit">
    <text evidence="1">Dimer of dimers.</text>
</comment>
<comment type="similarity">
    <text evidence="1">Belongs to the aldehyde dehydrogenase family.</text>
</comment>
<dbReference type="EC" id="1.2.1.8" evidence="1"/>
<dbReference type="EMBL" id="CP000133">
    <property type="protein sequence ID" value="ABC89944.1"/>
    <property type="molecule type" value="Genomic_DNA"/>
</dbReference>
<dbReference type="RefSeq" id="WP_011424478.1">
    <property type="nucleotide sequence ID" value="NC_007761.1"/>
</dbReference>
<dbReference type="SMR" id="Q2KB42"/>
<dbReference type="KEGG" id="ret:RHE_CH01137"/>
<dbReference type="eggNOG" id="COG1012">
    <property type="taxonomic scope" value="Bacteria"/>
</dbReference>
<dbReference type="HOGENOM" id="CLU_005391_0_0_5"/>
<dbReference type="OrthoDB" id="9772584at2"/>
<dbReference type="UniPathway" id="UPA00529">
    <property type="reaction ID" value="UER00386"/>
</dbReference>
<dbReference type="Proteomes" id="UP000001936">
    <property type="component" value="Chromosome"/>
</dbReference>
<dbReference type="GO" id="GO:0008802">
    <property type="term" value="F:betaine-aldehyde dehydrogenase (NAD+) activity"/>
    <property type="evidence" value="ECO:0007669"/>
    <property type="project" value="UniProtKB-UniRule"/>
</dbReference>
<dbReference type="GO" id="GO:0046872">
    <property type="term" value="F:metal ion binding"/>
    <property type="evidence" value="ECO:0007669"/>
    <property type="project" value="UniProtKB-KW"/>
</dbReference>
<dbReference type="GO" id="GO:0019285">
    <property type="term" value="P:glycine betaine biosynthetic process from choline"/>
    <property type="evidence" value="ECO:0007669"/>
    <property type="project" value="UniProtKB-UniRule"/>
</dbReference>
<dbReference type="CDD" id="cd07090">
    <property type="entry name" value="ALDH_F9_TMBADH"/>
    <property type="match status" value="1"/>
</dbReference>
<dbReference type="FunFam" id="3.40.309.10:FF:000012">
    <property type="entry name" value="Betaine aldehyde dehydrogenase"/>
    <property type="match status" value="1"/>
</dbReference>
<dbReference type="FunFam" id="3.40.605.10:FF:000007">
    <property type="entry name" value="NAD/NADP-dependent betaine aldehyde dehydrogenase"/>
    <property type="match status" value="1"/>
</dbReference>
<dbReference type="Gene3D" id="3.40.605.10">
    <property type="entry name" value="Aldehyde Dehydrogenase, Chain A, domain 1"/>
    <property type="match status" value="1"/>
</dbReference>
<dbReference type="Gene3D" id="3.40.309.10">
    <property type="entry name" value="Aldehyde Dehydrogenase, Chain A, domain 2"/>
    <property type="match status" value="1"/>
</dbReference>
<dbReference type="HAMAP" id="MF_00804">
    <property type="entry name" value="BADH"/>
    <property type="match status" value="1"/>
</dbReference>
<dbReference type="InterPro" id="IPR016161">
    <property type="entry name" value="Ald_DH/histidinol_DH"/>
</dbReference>
<dbReference type="InterPro" id="IPR016163">
    <property type="entry name" value="Ald_DH_C"/>
</dbReference>
<dbReference type="InterPro" id="IPR016160">
    <property type="entry name" value="Ald_DH_CS_CYS"/>
</dbReference>
<dbReference type="InterPro" id="IPR029510">
    <property type="entry name" value="Ald_DH_CS_GLU"/>
</dbReference>
<dbReference type="InterPro" id="IPR016162">
    <property type="entry name" value="Ald_DH_N"/>
</dbReference>
<dbReference type="InterPro" id="IPR015590">
    <property type="entry name" value="Aldehyde_DH_dom"/>
</dbReference>
<dbReference type="InterPro" id="IPR011264">
    <property type="entry name" value="BADH"/>
</dbReference>
<dbReference type="NCBIfam" id="TIGR01804">
    <property type="entry name" value="BADH"/>
    <property type="match status" value="1"/>
</dbReference>
<dbReference type="NCBIfam" id="NF009725">
    <property type="entry name" value="PRK13252.1"/>
    <property type="match status" value="1"/>
</dbReference>
<dbReference type="PANTHER" id="PTHR11699">
    <property type="entry name" value="ALDEHYDE DEHYDROGENASE-RELATED"/>
    <property type="match status" value="1"/>
</dbReference>
<dbReference type="Pfam" id="PF00171">
    <property type="entry name" value="Aldedh"/>
    <property type="match status" value="1"/>
</dbReference>
<dbReference type="SUPFAM" id="SSF53720">
    <property type="entry name" value="ALDH-like"/>
    <property type="match status" value="1"/>
</dbReference>
<dbReference type="PROSITE" id="PS00070">
    <property type="entry name" value="ALDEHYDE_DEHYDR_CYS"/>
    <property type="match status" value="1"/>
</dbReference>
<dbReference type="PROSITE" id="PS00687">
    <property type="entry name" value="ALDEHYDE_DEHYDR_GLU"/>
    <property type="match status" value="1"/>
</dbReference>
<gene>
    <name evidence="1" type="primary">betB</name>
    <name type="ordered locus">RHE_CH01137</name>
</gene>
<accession>Q2KB42</accession>